<organism>
    <name type="scientific">Macaca fascicularis</name>
    <name type="common">Crab-eating macaque</name>
    <name type="synonym">Cynomolgus monkey</name>
    <dbReference type="NCBI Taxonomy" id="9541"/>
    <lineage>
        <taxon>Eukaryota</taxon>
        <taxon>Metazoa</taxon>
        <taxon>Chordata</taxon>
        <taxon>Craniata</taxon>
        <taxon>Vertebrata</taxon>
        <taxon>Euteleostomi</taxon>
        <taxon>Mammalia</taxon>
        <taxon>Eutheria</taxon>
        <taxon>Euarchontoglires</taxon>
        <taxon>Primates</taxon>
        <taxon>Haplorrhini</taxon>
        <taxon>Catarrhini</taxon>
        <taxon>Cercopithecidae</taxon>
        <taxon>Cercopithecinae</taxon>
        <taxon>Macaca</taxon>
    </lineage>
</organism>
<dbReference type="EC" id="1.3.1.72" evidence="2"/>
<dbReference type="EMBL" id="AB125202">
    <property type="protein sequence ID" value="BAD51990.1"/>
    <property type="status" value="ALT_INIT"/>
    <property type="molecule type" value="mRNA"/>
</dbReference>
<dbReference type="RefSeq" id="NP_001274624.1">
    <property type="nucleotide sequence ID" value="NM_001287695.1"/>
</dbReference>
<dbReference type="STRING" id="9541.ENSMFAP00000016878"/>
<dbReference type="eggNOG" id="KOG1262">
    <property type="taxonomic scope" value="Eukaryota"/>
</dbReference>
<dbReference type="UniPathway" id="UPA00063"/>
<dbReference type="Proteomes" id="UP000233100">
    <property type="component" value="Unplaced"/>
</dbReference>
<dbReference type="GO" id="GO:0005783">
    <property type="term" value="C:endoplasmic reticulum"/>
    <property type="evidence" value="ECO:0000250"/>
    <property type="project" value="UniProtKB"/>
</dbReference>
<dbReference type="GO" id="GO:0005789">
    <property type="term" value="C:endoplasmic reticulum membrane"/>
    <property type="evidence" value="ECO:0007669"/>
    <property type="project" value="UniProtKB-SubCell"/>
</dbReference>
<dbReference type="GO" id="GO:0000139">
    <property type="term" value="C:Golgi membrane"/>
    <property type="evidence" value="ECO:0007669"/>
    <property type="project" value="UniProtKB-SubCell"/>
</dbReference>
<dbReference type="GO" id="GO:0005634">
    <property type="term" value="C:nucleus"/>
    <property type="evidence" value="ECO:0000250"/>
    <property type="project" value="UniProtKB"/>
</dbReference>
<dbReference type="GO" id="GO:0000246">
    <property type="term" value="F:Delta24(24-1) sterol reductase activity"/>
    <property type="evidence" value="ECO:0007669"/>
    <property type="project" value="TreeGrafter"/>
</dbReference>
<dbReference type="GO" id="GO:0050614">
    <property type="term" value="F:Delta24-sterol reductase activity"/>
    <property type="evidence" value="ECO:0007669"/>
    <property type="project" value="UniProtKB-EC"/>
</dbReference>
<dbReference type="GO" id="GO:0019899">
    <property type="term" value="F:enzyme binding"/>
    <property type="evidence" value="ECO:0000250"/>
    <property type="project" value="UniProtKB"/>
</dbReference>
<dbReference type="GO" id="GO:0071949">
    <property type="term" value="F:FAD binding"/>
    <property type="evidence" value="ECO:0007669"/>
    <property type="project" value="InterPro"/>
</dbReference>
<dbReference type="GO" id="GO:0042605">
    <property type="term" value="F:peptide antigen binding"/>
    <property type="evidence" value="ECO:0000250"/>
    <property type="project" value="UniProtKB"/>
</dbReference>
<dbReference type="GO" id="GO:0006695">
    <property type="term" value="P:cholesterol biosynthetic process"/>
    <property type="evidence" value="ECO:0000250"/>
    <property type="project" value="UniProtKB"/>
</dbReference>
<dbReference type="GO" id="GO:0043588">
    <property type="term" value="P:skin development"/>
    <property type="evidence" value="ECO:0000250"/>
    <property type="project" value="UniProtKB"/>
</dbReference>
<dbReference type="GO" id="GO:0009888">
    <property type="term" value="P:tissue development"/>
    <property type="evidence" value="ECO:0000250"/>
    <property type="project" value="UniProtKB"/>
</dbReference>
<dbReference type="FunFam" id="3.30.465.10:FF:000032">
    <property type="entry name" value="Delta(24)-sterol reductase"/>
    <property type="match status" value="1"/>
</dbReference>
<dbReference type="Gene3D" id="3.30.465.10">
    <property type="match status" value="1"/>
</dbReference>
<dbReference type="InterPro" id="IPR040165">
    <property type="entry name" value="Diminuto-like"/>
</dbReference>
<dbReference type="InterPro" id="IPR016166">
    <property type="entry name" value="FAD-bd_PCMH"/>
</dbReference>
<dbReference type="InterPro" id="IPR036318">
    <property type="entry name" value="FAD-bd_PCMH-like_sf"/>
</dbReference>
<dbReference type="InterPro" id="IPR016169">
    <property type="entry name" value="FAD-bd_PCMH_sub2"/>
</dbReference>
<dbReference type="InterPro" id="IPR006094">
    <property type="entry name" value="Oxid_FAD_bind_N"/>
</dbReference>
<dbReference type="PANTHER" id="PTHR10801">
    <property type="entry name" value="24-DEHYDROCHOLESTEROL REDUCTASE"/>
    <property type="match status" value="1"/>
</dbReference>
<dbReference type="PANTHER" id="PTHR10801:SF0">
    <property type="entry name" value="DELTA(24)-STEROL REDUCTASE"/>
    <property type="match status" value="1"/>
</dbReference>
<dbReference type="Pfam" id="PF01565">
    <property type="entry name" value="FAD_binding_4"/>
    <property type="match status" value="1"/>
</dbReference>
<dbReference type="SUPFAM" id="SSF56176">
    <property type="entry name" value="FAD-binding/transporter-associated domain-like"/>
    <property type="match status" value="1"/>
</dbReference>
<dbReference type="PROSITE" id="PS51387">
    <property type="entry name" value="FAD_PCMH"/>
    <property type="match status" value="1"/>
</dbReference>
<gene>
    <name type="primary">DHCR24</name>
    <name type="ORF">QmoA-12363</name>
</gene>
<keyword id="KW-0152">Cholesterol biosynthesis</keyword>
<keyword id="KW-0153">Cholesterol metabolism</keyword>
<keyword id="KW-0256">Endoplasmic reticulum</keyword>
<keyword id="KW-0274">FAD</keyword>
<keyword id="KW-0285">Flavoprotein</keyword>
<keyword id="KW-0333">Golgi apparatus</keyword>
<keyword id="KW-0444">Lipid biosynthesis</keyword>
<keyword id="KW-0443">Lipid metabolism</keyword>
<keyword id="KW-0472">Membrane</keyword>
<keyword id="KW-0521">NADP</keyword>
<keyword id="KW-0560">Oxidoreductase</keyword>
<keyword id="KW-1185">Reference proteome</keyword>
<keyword id="KW-0732">Signal</keyword>
<keyword id="KW-0752">Steroid biosynthesis</keyword>
<keyword id="KW-0753">Steroid metabolism</keyword>
<keyword id="KW-0756">Sterol biosynthesis</keyword>
<keyword id="KW-1207">Sterol metabolism</keyword>
<keyword id="KW-0812">Transmembrane</keyword>
<keyword id="KW-1133">Transmembrane helix</keyword>
<accession>Q60HC5</accession>
<reference key="1">
    <citation type="submission" date="2003-10" db="EMBL/GenBank/DDBJ databases">
        <title>Isolation and characterization of cDNA for macaque neurological disease genes.</title>
        <authorList>
            <person name="Kusuda J."/>
            <person name="Osada N."/>
            <person name="Tanuma R."/>
            <person name="Hirata M."/>
            <person name="Sugano S."/>
            <person name="Hashimoto K."/>
        </authorList>
    </citation>
    <scope>NUCLEOTIDE SEQUENCE [LARGE SCALE MRNA]</scope>
    <source>
        <tissue>Medulla oblongata</tissue>
    </source>
</reference>
<protein>
    <recommendedName>
        <fullName>Delta(24)-sterol reductase</fullName>
        <ecNumber evidence="2">1.3.1.72</ecNumber>
    </recommendedName>
    <alternativeName>
        <fullName>24-dehydrocholesterol reductase</fullName>
    </alternativeName>
    <alternativeName>
        <fullName>3-beta-hydroxysterol Delta-24-reductase</fullName>
    </alternativeName>
</protein>
<proteinExistence type="evidence at transcript level"/>
<feature type="signal peptide" evidence="4">
    <location>
        <begin position="1"/>
        <end position="22"/>
    </location>
</feature>
<feature type="chain" id="PRO_0000007231" description="Delta(24)-sterol reductase">
    <location>
        <begin position="23"/>
        <end position="516"/>
    </location>
</feature>
<feature type="topological domain" description="Lumenal" evidence="2">
    <location>
        <begin position="23"/>
        <end position="31"/>
    </location>
</feature>
<feature type="transmembrane region" description="Helical" evidence="4">
    <location>
        <begin position="32"/>
        <end position="52"/>
    </location>
</feature>
<feature type="topological domain" description="Cytoplasmic" evidence="2">
    <location>
        <begin position="53"/>
        <end position="516"/>
    </location>
</feature>
<feature type="domain" description="FAD-binding PCMH-type" evidence="5">
    <location>
        <begin position="58"/>
        <end position="234"/>
    </location>
</feature>
<feature type="binding site" evidence="4">
    <location>
        <begin position="163"/>
        <end position="175"/>
    </location>
    <ligand>
        <name>FAD</name>
        <dbReference type="ChEBI" id="CHEBI:57692"/>
    </ligand>
</feature>
<feature type="site" description="Cleavage; by caspase" evidence="4">
    <location>
        <begin position="122"/>
        <end position="123"/>
    </location>
</feature>
<feature type="site" description="Cleavage; by caspase" evidence="4">
    <location>
        <begin position="383"/>
        <end position="384"/>
    </location>
</feature>
<comment type="function">
    <text evidence="2">Catalyzes the reduction of the delta-24 double bond of sterol intermediates during cholesterol biosynthesis. In addition to its cholesterol-synthesizing activity, can protect cells from oxidative stress by reducing caspase 3 activity during apoptosis induced by oxidative stress. Also protects against amyloid-beta peptide-induced apoptosis.</text>
</comment>
<comment type="catalytic activity">
    <reaction evidence="2">
        <text>cholesterol + NADP(+) = desmosterol + NADPH + H(+)</text>
        <dbReference type="Rhea" id="RHEA:36391"/>
        <dbReference type="ChEBI" id="CHEBI:15378"/>
        <dbReference type="ChEBI" id="CHEBI:16113"/>
        <dbReference type="ChEBI" id="CHEBI:17737"/>
        <dbReference type="ChEBI" id="CHEBI:57783"/>
        <dbReference type="ChEBI" id="CHEBI:58349"/>
        <dbReference type="EC" id="1.3.1.72"/>
    </reaction>
    <physiologicalReaction direction="right-to-left" evidence="2">
        <dbReference type="Rhea" id="RHEA:36393"/>
    </physiologicalReaction>
</comment>
<comment type="catalytic activity">
    <reaction evidence="2">
        <text>lanosterol + NADPH + H(+) = 24,25-dihydrolanosterol + NADP(+)</text>
        <dbReference type="Rhea" id="RHEA:33919"/>
        <dbReference type="ChEBI" id="CHEBI:15378"/>
        <dbReference type="ChEBI" id="CHEBI:16521"/>
        <dbReference type="ChEBI" id="CHEBI:28113"/>
        <dbReference type="ChEBI" id="CHEBI:57783"/>
        <dbReference type="ChEBI" id="CHEBI:58349"/>
    </reaction>
    <physiologicalReaction direction="left-to-right" evidence="2">
        <dbReference type="Rhea" id="RHEA:33920"/>
    </physiologicalReaction>
</comment>
<comment type="catalytic activity">
    <reaction evidence="3">
        <text>5alpha-cholest-8-en-3beta-ol + NADP(+) = zymosterol + NADPH + H(+)</text>
        <dbReference type="Rhea" id="RHEA:36399"/>
        <dbReference type="ChEBI" id="CHEBI:15378"/>
        <dbReference type="ChEBI" id="CHEBI:16608"/>
        <dbReference type="ChEBI" id="CHEBI:18252"/>
        <dbReference type="ChEBI" id="CHEBI:57783"/>
        <dbReference type="ChEBI" id="CHEBI:58349"/>
        <dbReference type="EC" id="1.3.1.72"/>
    </reaction>
    <physiologicalReaction direction="right-to-left" evidence="3">
        <dbReference type="Rhea" id="RHEA:36401"/>
    </physiologicalReaction>
</comment>
<comment type="cofactor">
    <cofactor evidence="1">
        <name>FAD</name>
        <dbReference type="ChEBI" id="CHEBI:57692"/>
    </cofactor>
</comment>
<comment type="pathway">
    <text evidence="2">Steroid biosynthesis; cholesterol biosynthesis.</text>
</comment>
<comment type="subunit">
    <text evidence="2">Interacts with DHCR7; this interaction regulates DHCR7 activity.</text>
</comment>
<comment type="subcellular location">
    <subcellularLocation>
        <location evidence="2">Endoplasmic reticulum membrane</location>
        <topology evidence="4">Single-pass membrane protein</topology>
    </subcellularLocation>
    <subcellularLocation>
        <location evidence="2">Golgi apparatus membrane</location>
        <topology evidence="4">Single-pass membrane protein</topology>
    </subcellularLocation>
</comment>
<comment type="similarity">
    <text evidence="6">Belongs to the FAD-binding oxidoreductase/transferase type 4 family.</text>
</comment>
<comment type="sequence caution" evidence="6">
    <conflict type="erroneous initiation">
        <sequence resource="EMBL-CDS" id="BAD51990"/>
    </conflict>
</comment>
<evidence type="ECO:0000250" key="1"/>
<evidence type="ECO:0000250" key="2">
    <source>
        <dbReference type="UniProtKB" id="Q15392"/>
    </source>
</evidence>
<evidence type="ECO:0000250" key="3">
    <source>
        <dbReference type="UniProtKB" id="Q8VCH6"/>
    </source>
</evidence>
<evidence type="ECO:0000255" key="4"/>
<evidence type="ECO:0000255" key="5">
    <source>
        <dbReference type="PROSITE-ProRule" id="PRU00718"/>
    </source>
</evidence>
<evidence type="ECO:0000305" key="6"/>
<sequence>MEPAVSLAVCALLFLLWVRVKGLEFVLIHQRWVFVCLFLLPLSLIFDIYYYVRAWVVFKLSSAPRLHEQRVRDIQKQVREWKEQGSKTFMCTGRPGWLTVSLRVGKYKKTHKNIMINLMDILEVDTKKQIVRVEPLVTMGQVTALLTSIGWTLPVLPELDDLTVGGLIMGTGIESSSHKYGLFQHICTAYELVLADGSFVRCTPSENSDLFYAVPWSCGTLGFLVAAEIRIIPAKKYVKLRFEPVQGLEAICAKFTHESQRQENHFVEGLLYSLDEAVIMTGVMTDEVEPSKLNSIGNYYKPWFFKHVENYLKTNREGLEYIPLRHYYHRHTRSIFWELQDIIPFGNNPIFRYLFGWMVPPKISLLKLTQGETLRKLYEQHHVVQDMLVPMKCLQQALHTFQNDIHVYPIWLCPFILPSQPGLVHPKGNEAELYIDIGAYGEPRVKHFEARSCMRQLEKFVRSVHGFQMLYADCYMNREEFWEMFDGSLYHKLREKLGCQDAFPEVYDKICKAARH</sequence>
<name>DHC24_MACFA</name>